<protein>
    <recommendedName>
        <fullName evidence="1">3-hydroxydecanoyl-[acyl-carrier-protein] dehydratase</fullName>
        <ecNumber evidence="1">4.2.1.59</ecNumber>
    </recommendedName>
    <alternativeName>
        <fullName evidence="1">3-hydroxyacyl-[acyl-carrier-protein] dehydratase FabA</fullName>
    </alternativeName>
    <alternativeName>
        <fullName evidence="1">Beta-hydroxydecanoyl thioester dehydrase</fullName>
    </alternativeName>
    <alternativeName>
        <fullName evidence="1">Trans-2-decenoyl-[acyl-carrier-protein] isomerase</fullName>
        <ecNumber evidence="1">5.3.3.14</ecNumber>
    </alternativeName>
</protein>
<evidence type="ECO:0000255" key="1">
    <source>
        <dbReference type="HAMAP-Rule" id="MF_00405"/>
    </source>
</evidence>
<gene>
    <name evidence="1" type="primary">fabA</name>
    <name type="ordered locus">Arad_0158</name>
</gene>
<keyword id="KW-0963">Cytoplasm</keyword>
<keyword id="KW-0275">Fatty acid biosynthesis</keyword>
<keyword id="KW-0276">Fatty acid metabolism</keyword>
<keyword id="KW-0413">Isomerase</keyword>
<keyword id="KW-0444">Lipid biosynthesis</keyword>
<keyword id="KW-0443">Lipid metabolism</keyword>
<keyword id="KW-0456">Lyase</keyword>
<dbReference type="EC" id="4.2.1.59" evidence="1"/>
<dbReference type="EC" id="5.3.3.14" evidence="1"/>
<dbReference type="EMBL" id="CP000628">
    <property type="protein sequence ID" value="ACM24919.1"/>
    <property type="molecule type" value="Genomic_DNA"/>
</dbReference>
<dbReference type="RefSeq" id="WP_007690321.1">
    <property type="nucleotide sequence ID" value="NC_011985.1"/>
</dbReference>
<dbReference type="SMR" id="B9JGS3"/>
<dbReference type="STRING" id="311403.Arad_0158"/>
<dbReference type="GeneID" id="86850552"/>
<dbReference type="KEGG" id="ara:Arad_0158"/>
<dbReference type="eggNOG" id="COG0764">
    <property type="taxonomic scope" value="Bacteria"/>
</dbReference>
<dbReference type="HOGENOM" id="CLU_097925_0_0_5"/>
<dbReference type="UniPathway" id="UPA00094"/>
<dbReference type="Proteomes" id="UP000001600">
    <property type="component" value="Chromosome 1"/>
</dbReference>
<dbReference type="GO" id="GO:0005737">
    <property type="term" value="C:cytoplasm"/>
    <property type="evidence" value="ECO:0007669"/>
    <property type="project" value="UniProtKB-SubCell"/>
</dbReference>
<dbReference type="GO" id="GO:0019171">
    <property type="term" value="F:(3R)-hydroxyacyl-[acyl-carrier-protein] dehydratase activity"/>
    <property type="evidence" value="ECO:0007669"/>
    <property type="project" value="UniProtKB-UniRule"/>
</dbReference>
<dbReference type="GO" id="GO:0034017">
    <property type="term" value="F:trans-2-decenoyl-acyl-carrier-protein isomerase activity"/>
    <property type="evidence" value="ECO:0007669"/>
    <property type="project" value="UniProtKB-UniRule"/>
</dbReference>
<dbReference type="GO" id="GO:0006636">
    <property type="term" value="P:unsaturated fatty acid biosynthetic process"/>
    <property type="evidence" value="ECO:0007669"/>
    <property type="project" value="UniProtKB-UniRule"/>
</dbReference>
<dbReference type="CDD" id="cd01287">
    <property type="entry name" value="FabA"/>
    <property type="match status" value="1"/>
</dbReference>
<dbReference type="Gene3D" id="3.10.129.10">
    <property type="entry name" value="Hotdog Thioesterase"/>
    <property type="match status" value="1"/>
</dbReference>
<dbReference type="HAMAP" id="MF_00405">
    <property type="entry name" value="FabA"/>
    <property type="match status" value="1"/>
</dbReference>
<dbReference type="InterPro" id="IPR010083">
    <property type="entry name" value="FabA"/>
</dbReference>
<dbReference type="InterPro" id="IPR013114">
    <property type="entry name" value="FabA_FabZ"/>
</dbReference>
<dbReference type="InterPro" id="IPR029069">
    <property type="entry name" value="HotDog_dom_sf"/>
</dbReference>
<dbReference type="NCBIfam" id="TIGR01749">
    <property type="entry name" value="fabA"/>
    <property type="match status" value="1"/>
</dbReference>
<dbReference type="NCBIfam" id="NF003509">
    <property type="entry name" value="PRK05174.1"/>
    <property type="match status" value="1"/>
</dbReference>
<dbReference type="PANTHER" id="PTHR30272">
    <property type="entry name" value="3-HYDROXYACYL-[ACYL-CARRIER-PROTEIN] DEHYDRATASE"/>
    <property type="match status" value="1"/>
</dbReference>
<dbReference type="PANTHER" id="PTHR30272:SF8">
    <property type="entry name" value="3-HYDROXYDECANOYL-[ACYL-CARRIER-PROTEIN] DEHYDRATASE"/>
    <property type="match status" value="1"/>
</dbReference>
<dbReference type="Pfam" id="PF07977">
    <property type="entry name" value="FabA"/>
    <property type="match status" value="1"/>
</dbReference>
<dbReference type="SUPFAM" id="SSF54637">
    <property type="entry name" value="Thioesterase/thiol ester dehydrase-isomerase"/>
    <property type="match status" value="1"/>
</dbReference>
<organism>
    <name type="scientific">Rhizobium rhizogenes (strain K84 / ATCC BAA-868)</name>
    <name type="common">Agrobacterium radiobacter</name>
    <dbReference type="NCBI Taxonomy" id="311403"/>
    <lineage>
        <taxon>Bacteria</taxon>
        <taxon>Pseudomonadati</taxon>
        <taxon>Pseudomonadota</taxon>
        <taxon>Alphaproteobacteria</taxon>
        <taxon>Hyphomicrobiales</taxon>
        <taxon>Rhizobiaceae</taxon>
        <taxon>Rhizobium/Agrobacterium group</taxon>
        <taxon>Rhizobium</taxon>
    </lineage>
</organism>
<name>FABA_RHIR8</name>
<proteinExistence type="inferred from homology"/>
<accession>B9JGS3</accession>
<sequence length="171" mass="18910">MTTRQSSFNYEEILSCGRGELFGPGNAQLPLPPMLMVHRITDISETGGAFDKGYIRAEYDVRPDDWYFPCHFAGNPIMPGCLGLDGMWQLTGFFLGWLGEPGRGMALSTGEVKFKGMVRPDTKLLEYGIDFKRVMRGRLVLGTADGYLKADGEVIYQASDLRVGLSKDKAA</sequence>
<feature type="chain" id="PRO_1000201168" description="3-hydroxydecanoyl-[acyl-carrier-protein] dehydratase">
    <location>
        <begin position="1"/>
        <end position="171"/>
    </location>
</feature>
<feature type="active site" evidence="1">
    <location>
        <position position="71"/>
    </location>
</feature>
<comment type="function">
    <text evidence="1">Necessary for the introduction of cis unsaturation into fatty acids. Catalyzes the dehydration of (3R)-3-hydroxydecanoyl-ACP to E-(2)-decenoyl-ACP and then its isomerization to Z-(3)-decenoyl-ACP. Can catalyze the dehydratase reaction for beta-hydroxyacyl-ACPs with saturated chain lengths up to 16:0, being most active on intermediate chain length.</text>
</comment>
<comment type="catalytic activity">
    <reaction evidence="1">
        <text>a (3R)-hydroxyacyl-[ACP] = a (2E)-enoyl-[ACP] + H2O</text>
        <dbReference type="Rhea" id="RHEA:13097"/>
        <dbReference type="Rhea" id="RHEA-COMP:9925"/>
        <dbReference type="Rhea" id="RHEA-COMP:9945"/>
        <dbReference type="ChEBI" id="CHEBI:15377"/>
        <dbReference type="ChEBI" id="CHEBI:78784"/>
        <dbReference type="ChEBI" id="CHEBI:78827"/>
        <dbReference type="EC" id="4.2.1.59"/>
    </reaction>
</comment>
<comment type="catalytic activity">
    <reaction evidence="1">
        <text>(3R)-hydroxydecanoyl-[ACP] = (2E)-decenoyl-[ACP] + H2O</text>
        <dbReference type="Rhea" id="RHEA:41860"/>
        <dbReference type="Rhea" id="RHEA-COMP:9638"/>
        <dbReference type="Rhea" id="RHEA-COMP:9639"/>
        <dbReference type="ChEBI" id="CHEBI:15377"/>
        <dbReference type="ChEBI" id="CHEBI:78466"/>
        <dbReference type="ChEBI" id="CHEBI:78467"/>
    </reaction>
</comment>
<comment type="catalytic activity">
    <reaction evidence="1">
        <text>(2E)-decenoyl-[ACP] = (3Z)-decenoyl-[ACP]</text>
        <dbReference type="Rhea" id="RHEA:23568"/>
        <dbReference type="Rhea" id="RHEA-COMP:9639"/>
        <dbReference type="Rhea" id="RHEA-COMP:9927"/>
        <dbReference type="ChEBI" id="CHEBI:78467"/>
        <dbReference type="ChEBI" id="CHEBI:78798"/>
        <dbReference type="EC" id="5.3.3.14"/>
    </reaction>
</comment>
<comment type="pathway">
    <text evidence="1">Lipid metabolism; fatty acid biosynthesis.</text>
</comment>
<comment type="subunit">
    <text evidence="1">Homodimer.</text>
</comment>
<comment type="subcellular location">
    <subcellularLocation>
        <location evidence="1">Cytoplasm</location>
    </subcellularLocation>
</comment>
<comment type="similarity">
    <text evidence="1">Belongs to the thioester dehydratase family. FabA subfamily.</text>
</comment>
<reference key="1">
    <citation type="journal article" date="2009" name="J. Bacteriol.">
        <title>Genome sequences of three Agrobacterium biovars help elucidate the evolution of multichromosome genomes in bacteria.</title>
        <authorList>
            <person name="Slater S.C."/>
            <person name="Goldman B.S."/>
            <person name="Goodner B."/>
            <person name="Setubal J.C."/>
            <person name="Farrand S.K."/>
            <person name="Nester E.W."/>
            <person name="Burr T.J."/>
            <person name="Banta L."/>
            <person name="Dickerman A.W."/>
            <person name="Paulsen I."/>
            <person name="Otten L."/>
            <person name="Suen G."/>
            <person name="Welch R."/>
            <person name="Almeida N.F."/>
            <person name="Arnold F."/>
            <person name="Burton O.T."/>
            <person name="Du Z."/>
            <person name="Ewing A."/>
            <person name="Godsy E."/>
            <person name="Heisel S."/>
            <person name="Houmiel K.L."/>
            <person name="Jhaveri J."/>
            <person name="Lu J."/>
            <person name="Miller N.M."/>
            <person name="Norton S."/>
            <person name="Chen Q."/>
            <person name="Phoolcharoen W."/>
            <person name="Ohlin V."/>
            <person name="Ondrusek D."/>
            <person name="Pride N."/>
            <person name="Stricklin S.L."/>
            <person name="Sun J."/>
            <person name="Wheeler C."/>
            <person name="Wilson L."/>
            <person name="Zhu H."/>
            <person name="Wood D.W."/>
        </authorList>
    </citation>
    <scope>NUCLEOTIDE SEQUENCE [LARGE SCALE GENOMIC DNA]</scope>
    <source>
        <strain>K84 / ATCC BAA-868</strain>
    </source>
</reference>